<organism>
    <name type="scientific">Escherichia coli O7:K1 (strain IAI39 / ExPEC)</name>
    <dbReference type="NCBI Taxonomy" id="585057"/>
    <lineage>
        <taxon>Bacteria</taxon>
        <taxon>Pseudomonadati</taxon>
        <taxon>Pseudomonadota</taxon>
        <taxon>Gammaproteobacteria</taxon>
        <taxon>Enterobacterales</taxon>
        <taxon>Enterobacteriaceae</taxon>
        <taxon>Escherichia</taxon>
    </lineage>
</organism>
<comment type="function">
    <text evidence="1">Succinyl-CoA synthetase functions in the citric acid cycle (TCA), coupling the hydrolysis of succinyl-CoA to the synthesis of either ATP or GTP and thus represents the only step of substrate-level phosphorylation in the TCA. The beta subunit provides nucleotide specificity of the enzyme and binds the substrate succinate, while the binding sites for coenzyme A and phosphate are found in the alpha subunit.</text>
</comment>
<comment type="catalytic activity">
    <reaction evidence="1">
        <text>succinate + ATP + CoA = succinyl-CoA + ADP + phosphate</text>
        <dbReference type="Rhea" id="RHEA:17661"/>
        <dbReference type="ChEBI" id="CHEBI:30031"/>
        <dbReference type="ChEBI" id="CHEBI:30616"/>
        <dbReference type="ChEBI" id="CHEBI:43474"/>
        <dbReference type="ChEBI" id="CHEBI:57287"/>
        <dbReference type="ChEBI" id="CHEBI:57292"/>
        <dbReference type="ChEBI" id="CHEBI:456216"/>
        <dbReference type="EC" id="6.2.1.5"/>
    </reaction>
    <physiologicalReaction direction="right-to-left" evidence="1">
        <dbReference type="Rhea" id="RHEA:17663"/>
    </physiologicalReaction>
</comment>
<comment type="catalytic activity">
    <reaction evidence="1">
        <text>GTP + succinate + CoA = succinyl-CoA + GDP + phosphate</text>
        <dbReference type="Rhea" id="RHEA:22120"/>
        <dbReference type="ChEBI" id="CHEBI:30031"/>
        <dbReference type="ChEBI" id="CHEBI:37565"/>
        <dbReference type="ChEBI" id="CHEBI:43474"/>
        <dbReference type="ChEBI" id="CHEBI:57287"/>
        <dbReference type="ChEBI" id="CHEBI:57292"/>
        <dbReference type="ChEBI" id="CHEBI:58189"/>
    </reaction>
    <physiologicalReaction direction="right-to-left" evidence="1">
        <dbReference type="Rhea" id="RHEA:22122"/>
    </physiologicalReaction>
</comment>
<comment type="cofactor">
    <cofactor evidence="1">
        <name>Mg(2+)</name>
        <dbReference type="ChEBI" id="CHEBI:18420"/>
    </cofactor>
    <text evidence="1">Binds 1 Mg(2+) ion per subunit.</text>
</comment>
<comment type="pathway">
    <text evidence="1">Carbohydrate metabolism; tricarboxylic acid cycle; succinate from succinyl-CoA (ligase route): step 1/1.</text>
</comment>
<comment type="subunit">
    <text evidence="1">Heterotetramer of two alpha and two beta subunits.</text>
</comment>
<comment type="similarity">
    <text evidence="1">Belongs to the succinate/malate CoA ligase beta subunit family.</text>
</comment>
<keyword id="KW-0067">ATP-binding</keyword>
<keyword id="KW-0436">Ligase</keyword>
<keyword id="KW-0460">Magnesium</keyword>
<keyword id="KW-0479">Metal-binding</keyword>
<keyword id="KW-0547">Nucleotide-binding</keyword>
<keyword id="KW-0816">Tricarboxylic acid cycle</keyword>
<proteinExistence type="inferred from homology"/>
<name>SUCC_ECO7I</name>
<protein>
    <recommendedName>
        <fullName evidence="1">Succinate--CoA ligase [ADP-forming] subunit beta</fullName>
        <ecNumber evidence="1">6.2.1.5</ecNumber>
    </recommendedName>
    <alternativeName>
        <fullName evidence="1">Succinyl-CoA synthetase subunit beta</fullName>
        <shortName evidence="1">SCS-beta</shortName>
    </alternativeName>
</protein>
<accession>B7NMS9</accession>
<feature type="chain" id="PRO_1000129183" description="Succinate--CoA ligase [ADP-forming] subunit beta">
    <location>
        <begin position="1"/>
        <end position="388"/>
    </location>
</feature>
<feature type="domain" description="ATP-grasp" evidence="1">
    <location>
        <begin position="9"/>
        <end position="244"/>
    </location>
</feature>
<feature type="binding site" evidence="1">
    <location>
        <position position="46"/>
    </location>
    <ligand>
        <name>ATP</name>
        <dbReference type="ChEBI" id="CHEBI:30616"/>
    </ligand>
</feature>
<feature type="binding site" evidence="1">
    <location>
        <begin position="53"/>
        <end position="55"/>
    </location>
    <ligand>
        <name>ATP</name>
        <dbReference type="ChEBI" id="CHEBI:30616"/>
    </ligand>
</feature>
<feature type="binding site" evidence="1">
    <location>
        <position position="99"/>
    </location>
    <ligand>
        <name>ATP</name>
        <dbReference type="ChEBI" id="CHEBI:30616"/>
    </ligand>
</feature>
<feature type="binding site" evidence="1">
    <location>
        <position position="102"/>
    </location>
    <ligand>
        <name>ATP</name>
        <dbReference type="ChEBI" id="CHEBI:30616"/>
    </ligand>
</feature>
<feature type="binding site" evidence="1">
    <location>
        <position position="107"/>
    </location>
    <ligand>
        <name>ATP</name>
        <dbReference type="ChEBI" id="CHEBI:30616"/>
    </ligand>
</feature>
<feature type="binding site" evidence="1">
    <location>
        <position position="199"/>
    </location>
    <ligand>
        <name>Mg(2+)</name>
        <dbReference type="ChEBI" id="CHEBI:18420"/>
    </ligand>
</feature>
<feature type="binding site" evidence="1">
    <location>
        <position position="213"/>
    </location>
    <ligand>
        <name>Mg(2+)</name>
        <dbReference type="ChEBI" id="CHEBI:18420"/>
    </ligand>
</feature>
<feature type="binding site" evidence="1">
    <location>
        <position position="264"/>
    </location>
    <ligand>
        <name>substrate</name>
        <note>ligand shared with subunit alpha</note>
    </ligand>
</feature>
<feature type="binding site" evidence="1">
    <location>
        <begin position="321"/>
        <end position="323"/>
    </location>
    <ligand>
        <name>substrate</name>
        <note>ligand shared with subunit alpha</note>
    </ligand>
</feature>
<dbReference type="EC" id="6.2.1.5" evidence="1"/>
<dbReference type="EMBL" id="CU928164">
    <property type="protein sequence ID" value="CAR16822.1"/>
    <property type="molecule type" value="Genomic_DNA"/>
</dbReference>
<dbReference type="RefSeq" id="WP_001048602.1">
    <property type="nucleotide sequence ID" value="NC_011750.1"/>
</dbReference>
<dbReference type="RefSeq" id="YP_002406711.1">
    <property type="nucleotide sequence ID" value="NC_011750.1"/>
</dbReference>
<dbReference type="SMR" id="B7NMS9"/>
<dbReference type="STRING" id="585057.ECIAI39_0685"/>
<dbReference type="GeneID" id="93776757"/>
<dbReference type="KEGG" id="ect:ECIAI39_0685"/>
<dbReference type="PATRIC" id="fig|585057.6.peg.728"/>
<dbReference type="HOGENOM" id="CLU_037430_4_0_6"/>
<dbReference type="UniPathway" id="UPA00223">
    <property type="reaction ID" value="UER00999"/>
</dbReference>
<dbReference type="Proteomes" id="UP000000749">
    <property type="component" value="Chromosome"/>
</dbReference>
<dbReference type="GO" id="GO:0005829">
    <property type="term" value="C:cytosol"/>
    <property type="evidence" value="ECO:0007669"/>
    <property type="project" value="TreeGrafter"/>
</dbReference>
<dbReference type="GO" id="GO:0042709">
    <property type="term" value="C:succinate-CoA ligase complex"/>
    <property type="evidence" value="ECO:0007669"/>
    <property type="project" value="TreeGrafter"/>
</dbReference>
<dbReference type="GO" id="GO:0005524">
    <property type="term" value="F:ATP binding"/>
    <property type="evidence" value="ECO:0007669"/>
    <property type="project" value="UniProtKB-UniRule"/>
</dbReference>
<dbReference type="GO" id="GO:0000287">
    <property type="term" value="F:magnesium ion binding"/>
    <property type="evidence" value="ECO:0007669"/>
    <property type="project" value="UniProtKB-UniRule"/>
</dbReference>
<dbReference type="GO" id="GO:0004775">
    <property type="term" value="F:succinate-CoA ligase (ADP-forming) activity"/>
    <property type="evidence" value="ECO:0007669"/>
    <property type="project" value="UniProtKB-UniRule"/>
</dbReference>
<dbReference type="GO" id="GO:0004776">
    <property type="term" value="F:succinate-CoA ligase (GDP-forming) activity"/>
    <property type="evidence" value="ECO:0007669"/>
    <property type="project" value="RHEA"/>
</dbReference>
<dbReference type="GO" id="GO:0006104">
    <property type="term" value="P:succinyl-CoA metabolic process"/>
    <property type="evidence" value="ECO:0007669"/>
    <property type="project" value="TreeGrafter"/>
</dbReference>
<dbReference type="GO" id="GO:0006099">
    <property type="term" value="P:tricarboxylic acid cycle"/>
    <property type="evidence" value="ECO:0007669"/>
    <property type="project" value="UniProtKB-UniRule"/>
</dbReference>
<dbReference type="FunFam" id="3.30.1490.20:FF:000002">
    <property type="entry name" value="Succinate--CoA ligase [ADP-forming] subunit beta"/>
    <property type="match status" value="1"/>
</dbReference>
<dbReference type="FunFam" id="3.30.470.20:FF:000002">
    <property type="entry name" value="Succinate--CoA ligase [ADP-forming] subunit beta"/>
    <property type="match status" value="1"/>
</dbReference>
<dbReference type="FunFam" id="3.40.50.261:FF:000001">
    <property type="entry name" value="Succinate--CoA ligase [ADP-forming] subunit beta"/>
    <property type="match status" value="1"/>
</dbReference>
<dbReference type="Gene3D" id="3.30.1490.20">
    <property type="entry name" value="ATP-grasp fold, A domain"/>
    <property type="match status" value="1"/>
</dbReference>
<dbReference type="Gene3D" id="3.30.470.20">
    <property type="entry name" value="ATP-grasp fold, B domain"/>
    <property type="match status" value="1"/>
</dbReference>
<dbReference type="Gene3D" id="3.40.50.261">
    <property type="entry name" value="Succinyl-CoA synthetase domains"/>
    <property type="match status" value="1"/>
</dbReference>
<dbReference type="HAMAP" id="MF_00558">
    <property type="entry name" value="Succ_CoA_beta"/>
    <property type="match status" value="1"/>
</dbReference>
<dbReference type="InterPro" id="IPR011761">
    <property type="entry name" value="ATP-grasp"/>
</dbReference>
<dbReference type="InterPro" id="IPR013650">
    <property type="entry name" value="ATP-grasp_succ-CoA_synth-type"/>
</dbReference>
<dbReference type="InterPro" id="IPR013815">
    <property type="entry name" value="ATP_grasp_subdomain_1"/>
</dbReference>
<dbReference type="InterPro" id="IPR017866">
    <property type="entry name" value="Succ-CoA_synthase_bsu_CS"/>
</dbReference>
<dbReference type="InterPro" id="IPR005811">
    <property type="entry name" value="SUCC_ACL_C"/>
</dbReference>
<dbReference type="InterPro" id="IPR005809">
    <property type="entry name" value="Succ_CoA_ligase-like_bsu"/>
</dbReference>
<dbReference type="InterPro" id="IPR016102">
    <property type="entry name" value="Succinyl-CoA_synth-like"/>
</dbReference>
<dbReference type="NCBIfam" id="NF001913">
    <property type="entry name" value="PRK00696.1"/>
    <property type="match status" value="1"/>
</dbReference>
<dbReference type="NCBIfam" id="TIGR01016">
    <property type="entry name" value="sucCoAbeta"/>
    <property type="match status" value="1"/>
</dbReference>
<dbReference type="PANTHER" id="PTHR11815:SF10">
    <property type="entry name" value="SUCCINATE--COA LIGASE [GDP-FORMING] SUBUNIT BETA, MITOCHONDRIAL"/>
    <property type="match status" value="1"/>
</dbReference>
<dbReference type="PANTHER" id="PTHR11815">
    <property type="entry name" value="SUCCINYL-COA SYNTHETASE BETA CHAIN"/>
    <property type="match status" value="1"/>
</dbReference>
<dbReference type="Pfam" id="PF08442">
    <property type="entry name" value="ATP-grasp_2"/>
    <property type="match status" value="1"/>
</dbReference>
<dbReference type="Pfam" id="PF00549">
    <property type="entry name" value="Ligase_CoA"/>
    <property type="match status" value="1"/>
</dbReference>
<dbReference type="PIRSF" id="PIRSF001554">
    <property type="entry name" value="SucCS_beta"/>
    <property type="match status" value="1"/>
</dbReference>
<dbReference type="SUPFAM" id="SSF56059">
    <property type="entry name" value="Glutathione synthetase ATP-binding domain-like"/>
    <property type="match status" value="1"/>
</dbReference>
<dbReference type="SUPFAM" id="SSF52210">
    <property type="entry name" value="Succinyl-CoA synthetase domains"/>
    <property type="match status" value="1"/>
</dbReference>
<dbReference type="PROSITE" id="PS50975">
    <property type="entry name" value="ATP_GRASP"/>
    <property type="match status" value="1"/>
</dbReference>
<dbReference type="PROSITE" id="PS01217">
    <property type="entry name" value="SUCCINYL_COA_LIG_3"/>
    <property type="match status" value="1"/>
</dbReference>
<reference key="1">
    <citation type="journal article" date="2009" name="PLoS Genet.">
        <title>Organised genome dynamics in the Escherichia coli species results in highly diverse adaptive paths.</title>
        <authorList>
            <person name="Touchon M."/>
            <person name="Hoede C."/>
            <person name="Tenaillon O."/>
            <person name="Barbe V."/>
            <person name="Baeriswyl S."/>
            <person name="Bidet P."/>
            <person name="Bingen E."/>
            <person name="Bonacorsi S."/>
            <person name="Bouchier C."/>
            <person name="Bouvet O."/>
            <person name="Calteau A."/>
            <person name="Chiapello H."/>
            <person name="Clermont O."/>
            <person name="Cruveiller S."/>
            <person name="Danchin A."/>
            <person name="Diard M."/>
            <person name="Dossat C."/>
            <person name="Karoui M.E."/>
            <person name="Frapy E."/>
            <person name="Garry L."/>
            <person name="Ghigo J.M."/>
            <person name="Gilles A.M."/>
            <person name="Johnson J."/>
            <person name="Le Bouguenec C."/>
            <person name="Lescat M."/>
            <person name="Mangenot S."/>
            <person name="Martinez-Jehanne V."/>
            <person name="Matic I."/>
            <person name="Nassif X."/>
            <person name="Oztas S."/>
            <person name="Petit M.A."/>
            <person name="Pichon C."/>
            <person name="Rouy Z."/>
            <person name="Ruf C.S."/>
            <person name="Schneider D."/>
            <person name="Tourret J."/>
            <person name="Vacherie B."/>
            <person name="Vallenet D."/>
            <person name="Medigue C."/>
            <person name="Rocha E.P.C."/>
            <person name="Denamur E."/>
        </authorList>
    </citation>
    <scope>NUCLEOTIDE SEQUENCE [LARGE SCALE GENOMIC DNA]</scope>
    <source>
        <strain>IAI39 / ExPEC</strain>
    </source>
</reference>
<gene>
    <name evidence="1" type="primary">sucC</name>
    <name type="ordered locus">ECIAI39_0685</name>
</gene>
<evidence type="ECO:0000255" key="1">
    <source>
        <dbReference type="HAMAP-Rule" id="MF_00558"/>
    </source>
</evidence>
<sequence>MNLHEYQAKQLFARYGLPAPVGYACTTPREAEEAASKIGAGPWVVKCQVHAGGRGKAGGVKVVNSKEDIRAFAENWLGKRLVTYQTDANGQPVNQILVEAATDIAKELYLGAVVDRSSRRVVFMASTEGGVEIEKVAEETPHLIHKVALDPLTGPMPYQGRELAFKLGLEGKLVQQFTKIFMGLATIFLERDLALIEINPLVITKQGDLICLDGKLGADGNALFRQPDLREMRDQSQEDPREAQAAQWELNYVALDGNIGCMVNGAGLAMGTMDIVKLHGGEPANFLDVGGGATKERVTEAFKIILSDDKVKAVLVNIFGGIVRCDLIADGIIGAVAEVGVNVPVVVRLEGNNAELGAKKLADSGLNIIAAKGLTDAAQQVVAAVEGK</sequence>